<accession>P80955</accession>
<protein>
    <recommendedName>
        <fullName>Rugosin-B</fullName>
    </recommendedName>
</protein>
<sequence length="33" mass="3516">SLFSLIKAGAKFLGKNLLKQGAQYAACKVSKEC</sequence>
<name>RUGB_GLARU</name>
<proteinExistence type="evidence at protein level"/>
<keyword id="KW-0878">Amphibian defense peptide</keyword>
<keyword id="KW-0044">Antibiotic</keyword>
<keyword id="KW-0929">Antimicrobial</keyword>
<keyword id="KW-0903">Direct protein sequencing</keyword>
<keyword id="KW-1015">Disulfide bond</keyword>
<keyword id="KW-0964">Secreted</keyword>
<feature type="peptide" id="PRO_0000044663" description="Rugosin-B">
    <location>
        <begin position="1"/>
        <end position="33"/>
    </location>
</feature>
<feature type="disulfide bond">
    <location>
        <begin position="27"/>
        <end position="33"/>
    </location>
</feature>
<evidence type="ECO:0000305" key="1"/>
<dbReference type="GO" id="GO:0005576">
    <property type="term" value="C:extracellular region"/>
    <property type="evidence" value="ECO:0007669"/>
    <property type="project" value="UniProtKB-SubCell"/>
</dbReference>
<dbReference type="GO" id="GO:0042742">
    <property type="term" value="P:defense response to bacterium"/>
    <property type="evidence" value="ECO:0007669"/>
    <property type="project" value="UniProtKB-KW"/>
</dbReference>
<dbReference type="InterPro" id="IPR012521">
    <property type="entry name" value="Antimicrobial_frog_2"/>
</dbReference>
<dbReference type="Pfam" id="PF08023">
    <property type="entry name" value="Antimicrobial_2"/>
    <property type="match status" value="1"/>
</dbReference>
<organism>
    <name type="scientific">Glandirana rugosa</name>
    <name type="common">Japanese wrinkled frog</name>
    <name type="synonym">Rana rugosa</name>
    <dbReference type="NCBI Taxonomy" id="8410"/>
    <lineage>
        <taxon>Eukaryota</taxon>
        <taxon>Metazoa</taxon>
        <taxon>Chordata</taxon>
        <taxon>Craniata</taxon>
        <taxon>Vertebrata</taxon>
        <taxon>Euteleostomi</taxon>
        <taxon>Amphibia</taxon>
        <taxon>Batrachia</taxon>
        <taxon>Anura</taxon>
        <taxon>Neobatrachia</taxon>
        <taxon>Ranoidea</taxon>
        <taxon>Ranidae</taxon>
        <taxon>Glandirana</taxon>
    </lineage>
</organism>
<reference key="1">
    <citation type="journal article" date="1995" name="Biochem. Biophys. Res. Commun.">
        <title>Isolation and characterization of novel antimicrobial peptides, rugosins A, B and C, from the skin of the frog, Rana rugosa.</title>
        <authorList>
            <person name="Suzuki S."/>
            <person name="Ohe Y."/>
            <person name="Kagegawa T."/>
            <person name="Tatemoto K."/>
        </authorList>
    </citation>
    <scope>PROTEIN SEQUENCE</scope>
    <source>
        <tissue>Skin secretion</tissue>
    </source>
</reference>
<comment type="function">
    <text>Shows antibacterial activity against both Gram-negative and Gram-positive bacteria.</text>
</comment>
<comment type="subcellular location">
    <subcellularLocation>
        <location>Secreted</location>
    </subcellularLocation>
</comment>
<comment type="tissue specificity">
    <text>Expressed by the skin glands.</text>
</comment>
<comment type="similarity">
    <text evidence="1">Belongs to the frog skin active peptide (FSAP) family. Brevinin subfamily.</text>
</comment>